<sequence>MAKFASIVALLFAALVVFAAFEAPTVVEAKLCERSSGTWSGVCGNNNACKNQCIRLEGAQHGSCNYVFPAHKCICYFPC</sequence>
<name>DEF3_RAPSA</name>
<evidence type="ECO:0000250" key="1"/>
<evidence type="ECO:0000255" key="2"/>
<evidence type="ECO:0000305" key="3"/>
<gene>
    <name type="primary">AFP3</name>
</gene>
<proteinExistence type="inferred from homology"/>
<protein>
    <recommendedName>
        <fullName>Defensin-like protein 3</fullName>
    </recommendedName>
    <alternativeName>
        <fullName>Cysteine-rich antifungal protein 3</fullName>
        <shortName>AFP3</shortName>
    </alternativeName>
</protein>
<reference key="1">
    <citation type="submission" date="1996-04" db="EMBL/GenBank/DDBJ databases">
        <authorList>
            <person name="Terras F.R.G."/>
            <person name="Goderis I.J."/>
            <person name="Penninckx I.J."/>
            <person name="Osborn R.W."/>
            <person name="Broekaert W.F."/>
        </authorList>
    </citation>
    <scope>NUCLEOTIDE SEQUENCE [MRNA]</scope>
    <source>
        <strain>cv. Ronde Rode Kleine Witpunt</strain>
        <tissue>Seed</tissue>
    </source>
</reference>
<comment type="function">
    <text evidence="1">Possesses antifungal activity sensitive to inorganic cations.</text>
</comment>
<comment type="subcellular location">
    <subcellularLocation>
        <location>Secreted</location>
    </subcellularLocation>
</comment>
<comment type="similarity">
    <text evidence="3">Belongs to the DEFL family.</text>
</comment>
<feature type="signal peptide" evidence="2">
    <location>
        <begin position="1"/>
        <end position="29"/>
    </location>
</feature>
<feature type="chain" id="PRO_0000007053" description="Defensin-like protein 3">
    <location>
        <begin position="30"/>
        <end position="79"/>
    </location>
</feature>
<feature type="disulfide bond" evidence="1">
    <location>
        <begin position="32"/>
        <end position="79"/>
    </location>
</feature>
<feature type="disulfide bond" evidence="1">
    <location>
        <begin position="43"/>
        <end position="64"/>
    </location>
</feature>
<feature type="disulfide bond" evidence="1">
    <location>
        <begin position="49"/>
        <end position="73"/>
    </location>
</feature>
<feature type="disulfide bond" evidence="1">
    <location>
        <begin position="53"/>
        <end position="75"/>
    </location>
</feature>
<accession>O24332</accession>
<organism>
    <name type="scientific">Raphanus sativus</name>
    <name type="common">Radish</name>
    <name type="synonym">Raphanus raphanistrum var. sativus</name>
    <dbReference type="NCBI Taxonomy" id="3726"/>
    <lineage>
        <taxon>Eukaryota</taxon>
        <taxon>Viridiplantae</taxon>
        <taxon>Streptophyta</taxon>
        <taxon>Embryophyta</taxon>
        <taxon>Tracheophyta</taxon>
        <taxon>Spermatophyta</taxon>
        <taxon>Magnoliopsida</taxon>
        <taxon>eudicotyledons</taxon>
        <taxon>Gunneridae</taxon>
        <taxon>Pentapetalae</taxon>
        <taxon>rosids</taxon>
        <taxon>malvids</taxon>
        <taxon>Brassicales</taxon>
        <taxon>Brassicaceae</taxon>
        <taxon>Brassiceae</taxon>
        <taxon>Raphanus</taxon>
    </lineage>
</organism>
<dbReference type="EMBL" id="X97319">
    <property type="protein sequence ID" value="CAA65984.1"/>
    <property type="molecule type" value="mRNA"/>
</dbReference>
<dbReference type="PIR" id="T10243">
    <property type="entry name" value="T10243"/>
</dbReference>
<dbReference type="SMR" id="O24332"/>
<dbReference type="OrthoDB" id="1851987at2759"/>
<dbReference type="Proteomes" id="UP000504610">
    <property type="component" value="Unplaced"/>
</dbReference>
<dbReference type="GO" id="GO:0005576">
    <property type="term" value="C:extracellular region"/>
    <property type="evidence" value="ECO:0007669"/>
    <property type="project" value="UniProtKB-SubCell"/>
</dbReference>
<dbReference type="GO" id="GO:0050832">
    <property type="term" value="P:defense response to fungus"/>
    <property type="evidence" value="ECO:0007669"/>
    <property type="project" value="UniProtKB-KW"/>
</dbReference>
<dbReference type="GO" id="GO:0031640">
    <property type="term" value="P:killing of cells of another organism"/>
    <property type="evidence" value="ECO:0007669"/>
    <property type="project" value="UniProtKB-KW"/>
</dbReference>
<dbReference type="FunFam" id="3.30.30.10:FF:000003">
    <property type="entry name" value="Defensin-like protein 1"/>
    <property type="match status" value="1"/>
</dbReference>
<dbReference type="Gene3D" id="3.30.30.10">
    <property type="entry name" value="Knottin, scorpion toxin-like"/>
    <property type="match status" value="1"/>
</dbReference>
<dbReference type="InterPro" id="IPR008176">
    <property type="entry name" value="Defensin_plant"/>
</dbReference>
<dbReference type="InterPro" id="IPR003614">
    <property type="entry name" value="Scorpion_toxin-like"/>
</dbReference>
<dbReference type="InterPro" id="IPR036574">
    <property type="entry name" value="Scorpion_toxin-like_sf"/>
</dbReference>
<dbReference type="PANTHER" id="PTHR33147">
    <property type="entry name" value="DEFENSIN-LIKE PROTEIN 1"/>
    <property type="match status" value="1"/>
</dbReference>
<dbReference type="PANTHER" id="PTHR33147:SF101">
    <property type="entry name" value="DEFENSIN-LIKE PROTEIN 13"/>
    <property type="match status" value="1"/>
</dbReference>
<dbReference type="Pfam" id="PF00304">
    <property type="entry name" value="Gamma-thionin"/>
    <property type="match status" value="1"/>
</dbReference>
<dbReference type="SMART" id="SM00505">
    <property type="entry name" value="Knot1"/>
    <property type="match status" value="1"/>
</dbReference>
<dbReference type="SUPFAM" id="SSF57095">
    <property type="entry name" value="Scorpion toxin-like"/>
    <property type="match status" value="1"/>
</dbReference>
<dbReference type="PROSITE" id="PS00940">
    <property type="entry name" value="GAMMA_THIONIN"/>
    <property type="match status" value="1"/>
</dbReference>
<keyword id="KW-0929">Antimicrobial</keyword>
<keyword id="KW-1015">Disulfide bond</keyword>
<keyword id="KW-0295">Fungicide</keyword>
<keyword id="KW-0611">Plant defense</keyword>
<keyword id="KW-1185">Reference proteome</keyword>
<keyword id="KW-0964">Secreted</keyword>
<keyword id="KW-0732">Signal</keyword>